<accession>O62943</accession>
<geneLocation type="chloroplast"/>
<protein>
    <recommendedName>
        <fullName evidence="1">Ribulose bisphosphate carboxylase large chain</fullName>
        <shortName evidence="1">RuBisCO large subunit</shortName>
        <ecNumber evidence="1">4.1.1.39</ecNumber>
    </recommendedName>
</protein>
<proteinExistence type="inferred from homology"/>
<gene>
    <name evidence="1" type="primary">rbcL</name>
</gene>
<keyword id="KW-0007">Acetylation</keyword>
<keyword id="KW-0113">Calvin cycle</keyword>
<keyword id="KW-0120">Carbon dioxide fixation</keyword>
<keyword id="KW-0150">Chloroplast</keyword>
<keyword id="KW-1015">Disulfide bond</keyword>
<keyword id="KW-0456">Lyase</keyword>
<keyword id="KW-0460">Magnesium</keyword>
<keyword id="KW-0479">Metal-binding</keyword>
<keyword id="KW-0488">Methylation</keyword>
<keyword id="KW-0503">Monooxygenase</keyword>
<keyword id="KW-0560">Oxidoreductase</keyword>
<keyword id="KW-0601">Photorespiration</keyword>
<keyword id="KW-0602">Photosynthesis</keyword>
<keyword id="KW-0934">Plastid</keyword>
<dbReference type="EC" id="4.1.1.39" evidence="1"/>
<dbReference type="EMBL" id="Z95541">
    <property type="protein sequence ID" value="CAB08867.1"/>
    <property type="molecule type" value="Genomic_DNA"/>
</dbReference>
<dbReference type="SMR" id="O62943"/>
<dbReference type="GO" id="GO:0009507">
    <property type="term" value="C:chloroplast"/>
    <property type="evidence" value="ECO:0007669"/>
    <property type="project" value="UniProtKB-SubCell"/>
</dbReference>
<dbReference type="GO" id="GO:0000287">
    <property type="term" value="F:magnesium ion binding"/>
    <property type="evidence" value="ECO:0007669"/>
    <property type="project" value="UniProtKB-UniRule"/>
</dbReference>
<dbReference type="GO" id="GO:0004497">
    <property type="term" value="F:monooxygenase activity"/>
    <property type="evidence" value="ECO:0007669"/>
    <property type="project" value="UniProtKB-KW"/>
</dbReference>
<dbReference type="GO" id="GO:0016984">
    <property type="term" value="F:ribulose-bisphosphate carboxylase activity"/>
    <property type="evidence" value="ECO:0007669"/>
    <property type="project" value="UniProtKB-UniRule"/>
</dbReference>
<dbReference type="GO" id="GO:0009853">
    <property type="term" value="P:photorespiration"/>
    <property type="evidence" value="ECO:0007669"/>
    <property type="project" value="UniProtKB-KW"/>
</dbReference>
<dbReference type="GO" id="GO:0019253">
    <property type="term" value="P:reductive pentose-phosphate cycle"/>
    <property type="evidence" value="ECO:0007669"/>
    <property type="project" value="UniProtKB-UniRule"/>
</dbReference>
<dbReference type="CDD" id="cd08212">
    <property type="entry name" value="RuBisCO_large_I"/>
    <property type="match status" value="1"/>
</dbReference>
<dbReference type="FunFam" id="3.20.20.110:FF:000001">
    <property type="entry name" value="Ribulose bisphosphate carboxylase large chain"/>
    <property type="match status" value="1"/>
</dbReference>
<dbReference type="FunFam" id="3.30.70.150:FF:000001">
    <property type="entry name" value="Ribulose bisphosphate carboxylase large chain"/>
    <property type="match status" value="1"/>
</dbReference>
<dbReference type="Gene3D" id="3.20.20.110">
    <property type="entry name" value="Ribulose bisphosphate carboxylase, large subunit, C-terminal domain"/>
    <property type="match status" value="1"/>
</dbReference>
<dbReference type="Gene3D" id="3.30.70.150">
    <property type="entry name" value="RuBisCO large subunit, N-terminal domain"/>
    <property type="match status" value="1"/>
</dbReference>
<dbReference type="HAMAP" id="MF_01338">
    <property type="entry name" value="RuBisCO_L_type1"/>
    <property type="match status" value="1"/>
</dbReference>
<dbReference type="InterPro" id="IPR033966">
    <property type="entry name" value="RuBisCO"/>
</dbReference>
<dbReference type="InterPro" id="IPR020878">
    <property type="entry name" value="RuBisCo_large_chain_AS"/>
</dbReference>
<dbReference type="InterPro" id="IPR000685">
    <property type="entry name" value="RuBisCO_lsu_C"/>
</dbReference>
<dbReference type="InterPro" id="IPR036376">
    <property type="entry name" value="RuBisCO_lsu_C_sf"/>
</dbReference>
<dbReference type="InterPro" id="IPR017443">
    <property type="entry name" value="RuBisCO_lsu_fd_N"/>
</dbReference>
<dbReference type="InterPro" id="IPR036422">
    <property type="entry name" value="RuBisCO_lsu_N_sf"/>
</dbReference>
<dbReference type="InterPro" id="IPR020888">
    <property type="entry name" value="RuBisCO_lsuI"/>
</dbReference>
<dbReference type="NCBIfam" id="NF003252">
    <property type="entry name" value="PRK04208.1"/>
    <property type="match status" value="1"/>
</dbReference>
<dbReference type="PANTHER" id="PTHR42704">
    <property type="entry name" value="RIBULOSE BISPHOSPHATE CARBOXYLASE"/>
    <property type="match status" value="1"/>
</dbReference>
<dbReference type="PANTHER" id="PTHR42704:SF16">
    <property type="entry name" value="RIBULOSE BISPHOSPHATE CARBOXYLASE LARGE CHAIN"/>
    <property type="match status" value="1"/>
</dbReference>
<dbReference type="Pfam" id="PF00016">
    <property type="entry name" value="RuBisCO_large"/>
    <property type="match status" value="1"/>
</dbReference>
<dbReference type="Pfam" id="PF02788">
    <property type="entry name" value="RuBisCO_large_N"/>
    <property type="match status" value="1"/>
</dbReference>
<dbReference type="SFLD" id="SFLDG01052">
    <property type="entry name" value="RuBisCO"/>
    <property type="match status" value="1"/>
</dbReference>
<dbReference type="SFLD" id="SFLDS00014">
    <property type="entry name" value="RuBisCO"/>
    <property type="match status" value="1"/>
</dbReference>
<dbReference type="SFLD" id="SFLDG00301">
    <property type="entry name" value="RuBisCO-like_proteins"/>
    <property type="match status" value="1"/>
</dbReference>
<dbReference type="SUPFAM" id="SSF51649">
    <property type="entry name" value="RuBisCo, C-terminal domain"/>
    <property type="match status" value="1"/>
</dbReference>
<dbReference type="SUPFAM" id="SSF54966">
    <property type="entry name" value="RuBisCO, large subunit, small (N-terminal) domain"/>
    <property type="match status" value="1"/>
</dbReference>
<dbReference type="PROSITE" id="PS00157">
    <property type="entry name" value="RUBISCO_LARGE"/>
    <property type="match status" value="1"/>
</dbReference>
<comment type="function">
    <text evidence="1">RuBisCO catalyzes two reactions: the carboxylation of D-ribulose 1,5-bisphosphate, the primary event in carbon dioxide fixation, as well as the oxidative fragmentation of the pentose substrate in the photorespiration process. Both reactions occur simultaneously and in competition at the same active site.</text>
</comment>
<comment type="catalytic activity">
    <reaction evidence="1">
        <text>2 (2R)-3-phosphoglycerate + 2 H(+) = D-ribulose 1,5-bisphosphate + CO2 + H2O</text>
        <dbReference type="Rhea" id="RHEA:23124"/>
        <dbReference type="ChEBI" id="CHEBI:15377"/>
        <dbReference type="ChEBI" id="CHEBI:15378"/>
        <dbReference type="ChEBI" id="CHEBI:16526"/>
        <dbReference type="ChEBI" id="CHEBI:57870"/>
        <dbReference type="ChEBI" id="CHEBI:58272"/>
        <dbReference type="EC" id="4.1.1.39"/>
    </reaction>
</comment>
<comment type="catalytic activity">
    <reaction evidence="1">
        <text>D-ribulose 1,5-bisphosphate + O2 = 2-phosphoglycolate + (2R)-3-phosphoglycerate + 2 H(+)</text>
        <dbReference type="Rhea" id="RHEA:36631"/>
        <dbReference type="ChEBI" id="CHEBI:15378"/>
        <dbReference type="ChEBI" id="CHEBI:15379"/>
        <dbReference type="ChEBI" id="CHEBI:57870"/>
        <dbReference type="ChEBI" id="CHEBI:58033"/>
        <dbReference type="ChEBI" id="CHEBI:58272"/>
    </reaction>
</comment>
<comment type="cofactor">
    <cofactor evidence="1">
        <name>Mg(2+)</name>
        <dbReference type="ChEBI" id="CHEBI:18420"/>
    </cofactor>
    <text evidence="1">Binds 1 Mg(2+) ion per subunit.</text>
</comment>
<comment type="subunit">
    <text evidence="1">Heterohexadecamer of 8 large chains and 8 small chains; disulfide-linked. The disulfide link is formed within the large subunit homodimers.</text>
</comment>
<comment type="subcellular location">
    <subcellularLocation>
        <location>Plastid</location>
        <location>Chloroplast</location>
    </subcellularLocation>
</comment>
<comment type="PTM">
    <text evidence="1">The disulfide bond which can form in the large chain dimeric partners within the hexadecamer appears to be associated with oxidative stress and protein turnover.</text>
</comment>
<comment type="miscellaneous">
    <text evidence="1">The basic functional RuBisCO is composed of a large chain homodimer in a 'head-to-tail' conformation. In form I RuBisCO this homodimer is arranged in a barrel-like tetramer with the small subunits forming a tetrameric 'cap' on each end of the 'barrel'.</text>
</comment>
<comment type="similarity">
    <text evidence="1">Belongs to the RuBisCO large chain family. Type I subfamily.</text>
</comment>
<organism>
    <name type="scientific">Sesbania sesban</name>
    <name type="common">Egyptian riverhemp</name>
    <name type="synonym">Aeschynomene sesban</name>
    <dbReference type="NCBI Taxonomy" id="76396"/>
    <lineage>
        <taxon>Eukaryota</taxon>
        <taxon>Viridiplantae</taxon>
        <taxon>Streptophyta</taxon>
        <taxon>Embryophyta</taxon>
        <taxon>Tracheophyta</taxon>
        <taxon>Spermatophyta</taxon>
        <taxon>Magnoliopsida</taxon>
        <taxon>eudicotyledons</taxon>
        <taxon>Gunneridae</taxon>
        <taxon>Pentapetalae</taxon>
        <taxon>rosids</taxon>
        <taxon>fabids</taxon>
        <taxon>Fabales</taxon>
        <taxon>Fabaceae</taxon>
        <taxon>Papilionoideae</taxon>
        <taxon>50 kb inversion clade</taxon>
        <taxon>NPAAA clade</taxon>
        <taxon>Hologalegina</taxon>
        <taxon>robinioid clade</taxon>
        <taxon>Sesbanieae</taxon>
        <taxon>Sesbania</taxon>
    </lineage>
</organism>
<reference key="1">
    <citation type="journal article" date="1997" name="Mol. Phylogenet. Evol.">
        <title>Phylogenetic relationships in the Papilionoideae (family Leguminosae) based on nucleotide sequences of cpDNA (rbcL) and ncDNA (ITS 1 and 2).</title>
        <authorList>
            <person name="Kaess E."/>
            <person name="Wink M."/>
        </authorList>
    </citation>
    <scope>NUCLEOTIDE SEQUENCE [GENOMIC DNA]</scope>
    <source>
        <tissue>Leaf</tissue>
    </source>
</reference>
<feature type="propeptide" id="PRO_0000031401" evidence="1">
    <location>
        <begin position="1"/>
        <end position="2"/>
    </location>
</feature>
<feature type="chain" id="PRO_0000031402" description="Ribulose bisphosphate carboxylase large chain">
    <location>
        <begin position="3"/>
        <end position="473"/>
    </location>
</feature>
<feature type="active site" description="Proton acceptor" evidence="1">
    <location>
        <position position="175"/>
    </location>
</feature>
<feature type="active site" description="Proton acceptor" evidence="1">
    <location>
        <position position="294"/>
    </location>
</feature>
<feature type="binding site" description="in homodimeric partner" evidence="1">
    <location>
        <position position="123"/>
    </location>
    <ligand>
        <name>substrate</name>
    </ligand>
</feature>
<feature type="binding site" evidence="1">
    <location>
        <position position="173"/>
    </location>
    <ligand>
        <name>substrate</name>
    </ligand>
</feature>
<feature type="binding site" evidence="1">
    <location>
        <position position="177"/>
    </location>
    <ligand>
        <name>substrate</name>
    </ligand>
</feature>
<feature type="binding site" description="via carbamate group" evidence="1">
    <location>
        <position position="201"/>
    </location>
    <ligand>
        <name>Mg(2+)</name>
        <dbReference type="ChEBI" id="CHEBI:18420"/>
    </ligand>
</feature>
<feature type="binding site" evidence="1">
    <location>
        <position position="203"/>
    </location>
    <ligand>
        <name>Mg(2+)</name>
        <dbReference type="ChEBI" id="CHEBI:18420"/>
    </ligand>
</feature>
<feature type="binding site" evidence="1">
    <location>
        <position position="204"/>
    </location>
    <ligand>
        <name>Mg(2+)</name>
        <dbReference type="ChEBI" id="CHEBI:18420"/>
    </ligand>
</feature>
<feature type="binding site" evidence="1">
    <location>
        <position position="295"/>
    </location>
    <ligand>
        <name>substrate</name>
    </ligand>
</feature>
<feature type="binding site" evidence="1">
    <location>
        <position position="327"/>
    </location>
    <ligand>
        <name>substrate</name>
    </ligand>
</feature>
<feature type="binding site" evidence="1">
    <location>
        <position position="379"/>
    </location>
    <ligand>
        <name>substrate</name>
    </ligand>
</feature>
<feature type="site" description="Transition state stabilizer" evidence="1">
    <location>
        <position position="334"/>
    </location>
</feature>
<feature type="modified residue" description="N-acetylproline" evidence="1">
    <location>
        <position position="3"/>
    </location>
</feature>
<feature type="modified residue" description="N6,N6,N6-trimethyllysine" evidence="1">
    <location>
        <position position="14"/>
    </location>
</feature>
<feature type="modified residue" description="N6-carboxylysine" evidence="1">
    <location>
        <position position="201"/>
    </location>
</feature>
<feature type="disulfide bond" description="Interchain; in linked form" evidence="1">
    <location>
        <position position="247"/>
    </location>
</feature>
<name>RBL_SESSE</name>
<evidence type="ECO:0000255" key="1">
    <source>
        <dbReference type="HAMAP-Rule" id="MF_01338"/>
    </source>
</evidence>
<sequence>MSPQTETKASVGFKAGVKDYKLTYYTPDYETKDTDILAAFRVTPQPGVPPEEAGAAVAAESSTGTWTTVWTDGLTSLDRYKGRCYGIEPVAGEENQYIAYVAYPLDLFEEGSVTNMFTSIVGNVFGFKALRALRLEDLRIPTSYIKTFQGPPHGIQVERDKLNKYGRPLLGCTIKPKLGLSAKNYGRAVYECLRGGLDFTKDDENVNSQPFMRWRDRFLFCAEAIFKSQAETGEIKGHYLNATAGTCEEMIKRAVFARELGVPIVMHDYLTGGFTANTSLAHYCRDNGLLLHIHRAMHAVIDRQKNHGMHFRVLAKALRLSGGDHIHAGTVVGKLEGEREITLGFVDLLRDDYVEKDRSRGIYFTQDWVSLPGVLPVASGGIHVWHMPALTEIFGDDSVLQFGGGTLGHPWGNAPGAVANRVALEACVQARNEGRDLAREGNEIIREASKWSPELAAACEVWKEIKFEFPAMD</sequence>